<organism>
    <name type="scientific">Yersinia pestis bv. Antiqua (strain Angola)</name>
    <dbReference type="NCBI Taxonomy" id="349746"/>
    <lineage>
        <taxon>Bacteria</taxon>
        <taxon>Pseudomonadati</taxon>
        <taxon>Pseudomonadota</taxon>
        <taxon>Gammaproteobacteria</taxon>
        <taxon>Enterobacterales</taxon>
        <taxon>Yersiniaceae</taxon>
        <taxon>Yersinia</taxon>
    </lineage>
</organism>
<gene>
    <name evidence="1" type="primary">argP</name>
    <name type="synonym">iciA</name>
    <name type="ordered locus">YpAngola_A3821</name>
</gene>
<feature type="chain" id="PRO_1000127288" description="HTH-type transcriptional regulator ArgP">
    <location>
        <begin position="1"/>
        <end position="302"/>
    </location>
</feature>
<feature type="domain" description="HTH lysR-type" evidence="1">
    <location>
        <begin position="4"/>
        <end position="60"/>
    </location>
</feature>
<feature type="DNA-binding region" description="H-T-H motif" evidence="1">
    <location>
        <begin position="21"/>
        <end position="40"/>
    </location>
</feature>
<keyword id="KW-0238">DNA-binding</keyword>
<keyword id="KW-0804">Transcription</keyword>
<keyword id="KW-0805">Transcription regulation</keyword>
<proteinExistence type="inferred from homology"/>
<reference key="1">
    <citation type="journal article" date="2010" name="J. Bacteriol.">
        <title>Genome sequence of the deep-rooted Yersinia pestis strain Angola reveals new insights into the evolution and pangenome of the plague bacterium.</title>
        <authorList>
            <person name="Eppinger M."/>
            <person name="Worsham P.L."/>
            <person name="Nikolich M.P."/>
            <person name="Riley D.R."/>
            <person name="Sebastian Y."/>
            <person name="Mou S."/>
            <person name="Achtman M."/>
            <person name="Lindler L.E."/>
            <person name="Ravel J."/>
        </authorList>
    </citation>
    <scope>NUCLEOTIDE SEQUENCE [LARGE SCALE GENOMIC DNA]</scope>
    <source>
        <strain>Angola</strain>
    </source>
</reference>
<name>ARGP_YERPG</name>
<evidence type="ECO:0000255" key="1">
    <source>
        <dbReference type="HAMAP-Rule" id="MF_00513"/>
    </source>
</evidence>
<evidence type="ECO:0000305" key="2"/>
<protein>
    <recommendedName>
        <fullName evidence="1">HTH-type transcriptional regulator ArgP</fullName>
    </recommendedName>
</protein>
<comment type="function">
    <text evidence="1">Controls the transcription of genes involved in arginine and lysine metabolism.</text>
</comment>
<comment type="subunit">
    <text evidence="1">Homodimer.</text>
</comment>
<comment type="similarity">
    <text evidence="2">Belongs to the LysR transcriptional regulatory family.</text>
</comment>
<sequence>MKRPDYRTLQALDAVIRERGFERAAQKLCITQSAVSQRIKQLENLFGQPLLVRTVPPRPTEQGQKLLALLHQVELLEEEWLGNDNGVDTPLLLSLAVNADSLATWLLPALKPVLADLPIRLNLQVEDETRTQERLRRGEVVGAVSIQPQPLPSCLVDQLGALDYLFVASKAFAERYFPNGVTRSALLKAPAVAFDHLDDMHQAFLQQNFDLSPGSVPCHIVNSSEAFVQLARQGTTCCMIPHLQIEKELASGELIDLTPGLLQRRMLFWHRFAPESRTMRKVTDALLSYGRQVLRQDSFIGQ</sequence>
<accession>A9R4J7</accession>
<dbReference type="EMBL" id="CP000901">
    <property type="protein sequence ID" value="ABX86980.1"/>
    <property type="molecule type" value="Genomic_DNA"/>
</dbReference>
<dbReference type="RefSeq" id="WP_002209958.1">
    <property type="nucleotide sequence ID" value="NZ_CP009935.1"/>
</dbReference>
<dbReference type="SMR" id="A9R4J7"/>
<dbReference type="KEGG" id="ypg:YpAngola_A3821"/>
<dbReference type="PATRIC" id="fig|349746.12.peg.537"/>
<dbReference type="GO" id="GO:0003677">
    <property type="term" value="F:DNA binding"/>
    <property type="evidence" value="ECO:0007669"/>
    <property type="project" value="UniProtKB-UniRule"/>
</dbReference>
<dbReference type="GO" id="GO:0003700">
    <property type="term" value="F:DNA-binding transcription factor activity"/>
    <property type="evidence" value="ECO:0007669"/>
    <property type="project" value="UniProtKB-UniRule"/>
</dbReference>
<dbReference type="CDD" id="cd08428">
    <property type="entry name" value="PBP2_IciA_ArgP"/>
    <property type="match status" value="1"/>
</dbReference>
<dbReference type="FunFam" id="1.10.10.10:FF:000061">
    <property type="entry name" value="HTH-type transcriptional regulator ArgP"/>
    <property type="match status" value="1"/>
</dbReference>
<dbReference type="FunFam" id="3.40.190.290:FF:000002">
    <property type="entry name" value="HTH-type transcriptional regulator ArgP"/>
    <property type="match status" value="1"/>
</dbReference>
<dbReference type="Gene3D" id="3.40.190.290">
    <property type="match status" value="1"/>
</dbReference>
<dbReference type="Gene3D" id="1.10.10.10">
    <property type="entry name" value="Winged helix-like DNA-binding domain superfamily/Winged helix DNA-binding domain"/>
    <property type="match status" value="1"/>
</dbReference>
<dbReference type="HAMAP" id="MF_00513">
    <property type="entry name" value="HTH_type_ArgP"/>
    <property type="match status" value="1"/>
</dbReference>
<dbReference type="InterPro" id="IPR017685">
    <property type="entry name" value="ArgP"/>
</dbReference>
<dbReference type="InterPro" id="IPR023490">
    <property type="entry name" value="ArgP_gammaproteobact"/>
</dbReference>
<dbReference type="InterPro" id="IPR050176">
    <property type="entry name" value="LTTR"/>
</dbReference>
<dbReference type="InterPro" id="IPR005119">
    <property type="entry name" value="LysR_subst-bd"/>
</dbReference>
<dbReference type="InterPro" id="IPR000847">
    <property type="entry name" value="Tscrpt_reg_HTH_LysR"/>
</dbReference>
<dbReference type="InterPro" id="IPR036388">
    <property type="entry name" value="WH-like_DNA-bd_sf"/>
</dbReference>
<dbReference type="InterPro" id="IPR036390">
    <property type="entry name" value="WH_DNA-bd_sf"/>
</dbReference>
<dbReference type="NCBIfam" id="TIGR03298">
    <property type="entry name" value="argP"/>
    <property type="match status" value="1"/>
</dbReference>
<dbReference type="NCBIfam" id="NF002964">
    <property type="entry name" value="PRK03635.1"/>
    <property type="match status" value="1"/>
</dbReference>
<dbReference type="NCBIfam" id="NF009888">
    <property type="entry name" value="PRK13348.1"/>
    <property type="match status" value="1"/>
</dbReference>
<dbReference type="PANTHER" id="PTHR30579:SF2">
    <property type="entry name" value="HTH-TYPE TRANSCRIPTIONAL REGULATOR ARGP"/>
    <property type="match status" value="1"/>
</dbReference>
<dbReference type="PANTHER" id="PTHR30579">
    <property type="entry name" value="TRANSCRIPTIONAL REGULATOR"/>
    <property type="match status" value="1"/>
</dbReference>
<dbReference type="Pfam" id="PF00126">
    <property type="entry name" value="HTH_1"/>
    <property type="match status" value="1"/>
</dbReference>
<dbReference type="Pfam" id="PF03466">
    <property type="entry name" value="LysR_substrate"/>
    <property type="match status" value="1"/>
</dbReference>
<dbReference type="PRINTS" id="PR00039">
    <property type="entry name" value="HTHLYSR"/>
</dbReference>
<dbReference type="SUPFAM" id="SSF53850">
    <property type="entry name" value="Periplasmic binding protein-like II"/>
    <property type="match status" value="1"/>
</dbReference>
<dbReference type="SUPFAM" id="SSF46785">
    <property type="entry name" value="Winged helix' DNA-binding domain"/>
    <property type="match status" value="1"/>
</dbReference>
<dbReference type="PROSITE" id="PS50931">
    <property type="entry name" value="HTH_LYSR"/>
    <property type="match status" value="1"/>
</dbReference>